<dbReference type="EMBL" id="AY653733">
    <property type="protein sequence ID" value="AAV50842.1"/>
    <property type="molecule type" value="Genomic_DNA"/>
</dbReference>
<dbReference type="SMR" id="Q5UR93"/>
<dbReference type="KEGG" id="vg:9925215"/>
<dbReference type="Proteomes" id="UP000001134">
    <property type="component" value="Genome"/>
</dbReference>
<dbReference type="Gene3D" id="1.25.40.20">
    <property type="entry name" value="Ankyrin repeat-containing domain"/>
    <property type="match status" value="1"/>
</dbReference>
<dbReference type="InterPro" id="IPR002110">
    <property type="entry name" value="Ankyrin_rpt"/>
</dbReference>
<dbReference type="InterPro" id="IPR036770">
    <property type="entry name" value="Ankyrin_rpt-contain_sf"/>
</dbReference>
<dbReference type="PANTHER" id="PTHR44207:SF1">
    <property type="entry name" value="SURFACE ANTIGEN BSPA-LIKE"/>
    <property type="match status" value="1"/>
</dbReference>
<dbReference type="PANTHER" id="PTHR44207">
    <property type="entry name" value="SURFACE ANTIGEN BSPA-LIKE-RELATED"/>
    <property type="match status" value="1"/>
</dbReference>
<dbReference type="Pfam" id="PF12796">
    <property type="entry name" value="Ank_2"/>
    <property type="match status" value="1"/>
</dbReference>
<dbReference type="SMART" id="SM00248">
    <property type="entry name" value="ANK"/>
    <property type="match status" value="5"/>
</dbReference>
<dbReference type="SUPFAM" id="SSF48403">
    <property type="entry name" value="Ankyrin repeat"/>
    <property type="match status" value="1"/>
</dbReference>
<dbReference type="PROSITE" id="PS50297">
    <property type="entry name" value="ANK_REP_REGION"/>
    <property type="match status" value="1"/>
</dbReference>
<dbReference type="PROSITE" id="PS50088">
    <property type="entry name" value="ANK_REPEAT"/>
    <property type="match status" value="1"/>
</dbReference>
<sequence length="463" mass="53811">MVVQYLLFSNDKNVDPTNLVLRQDFLHQKCLLISVSNSSHIFHEMLSFRNVRKDDFIIEFFSENNVCSLDNCIAKKIHYLSDINTFDMLLSLDGEYESLIKWFISVNYFEALQNYQHLVKSLSLKTDLMFYAVSKNVSIDVINFLIDMDCKCTIDSITRAIAEKKLDIAKIIIDHNPSENIIHESLYCLSYEKQKDLFKYVLENYKIDSRYYHKSLIYWMINKDEEIMCDLLCRIDIKEFSKEKNISSYVIQSNSLNVVKTFVEHGLQFNPDIYLWVNGNSESENIVRYIIELGIDYRPHIDRLLKICITSGTFSHLEYLINLGVSQENINEAFLTAVSEDKFELIKYLIYMGADINYKNTIAASYTDNIDVLKYLIEKGADITTGGSNDVINHAIGSHQSDFCRCLLENGATITLDDRDELMVIYRELTNGCSYEDDDYEDLDQLTNSDLRNLIHEEIMNSC</sequence>
<reference key="1">
    <citation type="journal article" date="2004" name="Science">
        <title>The 1.2-megabase genome sequence of Mimivirus.</title>
        <authorList>
            <person name="Raoult D."/>
            <person name="Audic S."/>
            <person name="Robert C."/>
            <person name="Abergel C."/>
            <person name="Renesto P."/>
            <person name="Ogata H."/>
            <person name="La Scola B."/>
            <person name="Susan M."/>
            <person name="Claverie J.-M."/>
        </authorList>
    </citation>
    <scope>NUCLEOTIDE SEQUENCE [LARGE SCALE GENOMIC DNA]</scope>
    <source>
        <strain>Rowbotham-Bradford</strain>
    </source>
</reference>
<organismHost>
    <name type="scientific">Acanthamoeba polyphaga</name>
    <name type="common">Amoeba</name>
    <dbReference type="NCBI Taxonomy" id="5757"/>
</organismHost>
<protein>
    <recommendedName>
        <fullName>Putative ankyrin repeat protein R579</fullName>
    </recommendedName>
</protein>
<organism>
    <name type="scientific">Acanthamoeba polyphaga mimivirus</name>
    <name type="common">APMV</name>
    <dbReference type="NCBI Taxonomy" id="212035"/>
    <lineage>
        <taxon>Viruses</taxon>
        <taxon>Varidnaviria</taxon>
        <taxon>Bamfordvirae</taxon>
        <taxon>Nucleocytoviricota</taxon>
        <taxon>Megaviricetes</taxon>
        <taxon>Imitervirales</taxon>
        <taxon>Mimiviridae</taxon>
        <taxon>Megamimivirinae</taxon>
        <taxon>Mimivirus</taxon>
        <taxon>Mimivirus bradfordmassiliense</taxon>
    </lineage>
</organism>
<proteinExistence type="predicted"/>
<feature type="chain" id="PRO_0000067174" description="Putative ankyrin repeat protein R579">
    <location>
        <begin position="1"/>
        <end position="463"/>
    </location>
</feature>
<feature type="repeat" description="ANK 1">
    <location>
        <begin position="124"/>
        <end position="154"/>
    </location>
</feature>
<feature type="repeat" description="ANK 2">
    <location>
        <begin position="156"/>
        <end position="181"/>
    </location>
</feature>
<feature type="repeat" description="ANK 3">
    <location>
        <begin position="242"/>
        <end position="271"/>
    </location>
</feature>
<feature type="repeat" description="ANK 4">
    <location>
        <begin position="273"/>
        <end position="299"/>
    </location>
</feature>
<feature type="repeat" description="ANK 5">
    <location>
        <begin position="300"/>
        <end position="328"/>
    </location>
</feature>
<feature type="repeat" description="ANK 6">
    <location>
        <begin position="329"/>
        <end position="355"/>
    </location>
</feature>
<feature type="repeat" description="ANK 7">
    <location>
        <begin position="356"/>
        <end position="385"/>
    </location>
</feature>
<feature type="repeat" description="ANK 8">
    <location>
        <begin position="387"/>
        <end position="416"/>
    </location>
</feature>
<name>YR579_MIMIV</name>
<accession>Q5UR93</accession>
<gene>
    <name type="ordered locus">MIMI_R579</name>
</gene>
<keyword id="KW-0040">ANK repeat</keyword>
<keyword id="KW-1185">Reference proteome</keyword>
<keyword id="KW-0677">Repeat</keyword>